<comment type="function">
    <text evidence="1">Required for efficient transcription initiation by RNA polymerase I (Pol I).</text>
</comment>
<comment type="subcellular location">
    <subcellularLocation>
        <location evidence="1">Nucleus</location>
        <location evidence="1">Nucleolus</location>
    </subcellularLocation>
</comment>
<comment type="similarity">
    <text evidence="3">Belongs to the RRN3 family.</text>
</comment>
<reference key="1">
    <citation type="journal article" date="1998" name="Science">
        <title>Genome sequence of the nematode C. elegans: a platform for investigating biology.</title>
        <authorList>
            <consortium name="The C. elegans sequencing consortium"/>
        </authorList>
    </citation>
    <scope>NUCLEOTIDE SEQUENCE [LARGE SCALE GENOMIC DNA]</scope>
    <source>
        <strain>Bristol N2</strain>
    </source>
</reference>
<dbReference type="EMBL" id="Z35597">
    <property type="protein sequence ID" value="CAA84645.1"/>
    <property type="molecule type" value="Genomic_DNA"/>
</dbReference>
<dbReference type="PIR" id="T19785">
    <property type="entry name" value="T19785"/>
</dbReference>
<dbReference type="RefSeq" id="NP_001379058.1">
    <property type="nucleotide sequence ID" value="NM_001393312.1"/>
</dbReference>
<dbReference type="RefSeq" id="NP_497803.1">
    <property type="nucleotide sequence ID" value="NM_065402.5"/>
</dbReference>
<dbReference type="SMR" id="P48322"/>
<dbReference type="BioGRID" id="40754">
    <property type="interactions" value="15"/>
</dbReference>
<dbReference type="FunCoup" id="P48322">
    <property type="interactions" value="2697"/>
</dbReference>
<dbReference type="STRING" id="6239.C36E8.1.2"/>
<dbReference type="PaxDb" id="6239-C36E8.1.1"/>
<dbReference type="PeptideAtlas" id="P48322"/>
<dbReference type="EnsemblMetazoa" id="C36E8.1.1">
    <property type="protein sequence ID" value="C36E8.1.1"/>
    <property type="gene ID" value="WBGene00007980"/>
</dbReference>
<dbReference type="GeneID" id="175517"/>
<dbReference type="UCSC" id="C36E8.1.1">
    <property type="organism name" value="c. elegans"/>
</dbReference>
<dbReference type="AGR" id="WB:WBGene00007980"/>
<dbReference type="WormBase" id="C36E8.1">
    <property type="protein sequence ID" value="CE00909"/>
    <property type="gene ID" value="WBGene00007980"/>
    <property type="gene designation" value="tif-1A"/>
</dbReference>
<dbReference type="eggNOG" id="KOG2434">
    <property type="taxonomic scope" value="Eukaryota"/>
</dbReference>
<dbReference type="GeneTree" id="ENSGT00390000001488"/>
<dbReference type="HOGENOM" id="CLU_419928_0_0_1"/>
<dbReference type="InParanoid" id="P48322"/>
<dbReference type="OMA" id="FKHFYAA"/>
<dbReference type="OrthoDB" id="26970at2759"/>
<dbReference type="PhylomeDB" id="P48322"/>
<dbReference type="Reactome" id="R-CEL-73762">
    <property type="pathway name" value="RNA Polymerase I Transcription Initiation"/>
</dbReference>
<dbReference type="Reactome" id="R-CEL-73772">
    <property type="pathway name" value="RNA Polymerase I Promoter Escape"/>
</dbReference>
<dbReference type="PRO" id="PR:P48322"/>
<dbReference type="Proteomes" id="UP000001940">
    <property type="component" value="Chromosome III"/>
</dbReference>
<dbReference type="Bgee" id="WBGene00007980">
    <property type="expression patterns" value="Expressed in pharyngeal muscle cell (C elegans) and 4 other cell types or tissues"/>
</dbReference>
<dbReference type="GO" id="GO:0005730">
    <property type="term" value="C:nucleolus"/>
    <property type="evidence" value="ECO:0007669"/>
    <property type="project" value="UniProtKB-SubCell"/>
</dbReference>
<dbReference type="GO" id="GO:0005634">
    <property type="term" value="C:nucleus"/>
    <property type="evidence" value="ECO:0000318"/>
    <property type="project" value="GO_Central"/>
</dbReference>
<dbReference type="GO" id="GO:0001042">
    <property type="term" value="F:RNA polymerase I core binding"/>
    <property type="evidence" value="ECO:0000318"/>
    <property type="project" value="GO_Central"/>
</dbReference>
<dbReference type="GO" id="GO:0001181">
    <property type="term" value="F:RNA polymerase I general transcription initiation factor activity"/>
    <property type="evidence" value="ECO:0000318"/>
    <property type="project" value="GO_Central"/>
</dbReference>
<dbReference type="GO" id="GO:0006361">
    <property type="term" value="P:transcription initiation at RNA polymerase I promoter"/>
    <property type="evidence" value="ECO:0000318"/>
    <property type="project" value="GO_Central"/>
</dbReference>
<dbReference type="InterPro" id="IPR007991">
    <property type="entry name" value="RNA_pol_I_trans_ini_fac_RRN3"/>
</dbReference>
<dbReference type="PANTHER" id="PTHR12790:SF0">
    <property type="entry name" value="RNA POLYMERASE I-SPECIFIC TRANSCRIPTION INITIATION FACTOR RRN3-RELATED"/>
    <property type="match status" value="1"/>
</dbReference>
<dbReference type="PANTHER" id="PTHR12790">
    <property type="entry name" value="TRANSCRIPTION INITIATION FACTOR IA RRN3"/>
    <property type="match status" value="1"/>
</dbReference>
<dbReference type="Pfam" id="PF05327">
    <property type="entry name" value="RRN3"/>
    <property type="match status" value="1"/>
</dbReference>
<evidence type="ECO:0000250" key="1">
    <source>
        <dbReference type="UniProtKB" id="Q9NYV6"/>
    </source>
</evidence>
<evidence type="ECO:0000256" key="2">
    <source>
        <dbReference type="SAM" id="MobiDB-lite"/>
    </source>
</evidence>
<evidence type="ECO:0000305" key="3"/>
<evidence type="ECO:0000312" key="4">
    <source>
        <dbReference type="WormBase" id="C36E8.1"/>
    </source>
</evidence>
<name>RRN3_CAEEL</name>
<feature type="chain" id="PRO_0000211428" description="RNA polymerase I-specific transcription initiation factor tif-1A">
    <location>
        <begin position="1"/>
        <end position="654"/>
    </location>
</feature>
<feature type="region of interest" description="Disordered" evidence="2">
    <location>
        <begin position="1"/>
        <end position="37"/>
    </location>
</feature>
<feature type="compositionally biased region" description="Basic and acidic residues" evidence="2">
    <location>
        <begin position="13"/>
        <end position="31"/>
    </location>
</feature>
<gene>
    <name evidence="4" type="primary">tif-1A</name>
    <name evidence="4" type="ORF">C36E8.1</name>
</gene>
<organism>
    <name type="scientific">Caenorhabditis elegans</name>
    <dbReference type="NCBI Taxonomy" id="6239"/>
    <lineage>
        <taxon>Eukaryota</taxon>
        <taxon>Metazoa</taxon>
        <taxon>Ecdysozoa</taxon>
        <taxon>Nematoda</taxon>
        <taxon>Chromadorea</taxon>
        <taxon>Rhabditida</taxon>
        <taxon>Rhabditina</taxon>
        <taxon>Rhabditomorpha</taxon>
        <taxon>Rhabditoidea</taxon>
        <taxon>Rhabditidae</taxon>
        <taxon>Peloderinae</taxon>
        <taxon>Caenorhabditis</taxon>
    </lineage>
</organism>
<keyword id="KW-0539">Nucleus</keyword>
<keyword id="KW-1185">Reference proteome</keyword>
<keyword id="KW-0804">Transcription</keyword>
<keyword id="KW-0805">Transcription regulation</keyword>
<protein>
    <recommendedName>
        <fullName evidence="1">RNA polymerase I-specific transcription initiation factor tif-1A</fullName>
    </recommendedName>
    <alternativeName>
        <fullName evidence="4">Transcription initiation factor 1A</fullName>
    </alternativeName>
</protein>
<accession>P48322</accession>
<sequence>MKRSTANAPKLSPKHESESDPKKVKLEEEAKPTVNQAPTGREIVENYLKGDVTAAVLYRKICNALETFEQWESEAPKIQLLDQFLNIADAMEARTETLVKRLLSLRWDKIPGSVIERFRNFLCELAIRHLCFTEEVYSAVVERLVPQISVTEETGVVTLILTEKVQNEHFEMAHHIISSVLRCFPLSARALLKCVKRVMPHFTRPSVTVAGYMRNLILMQKYIPASISKDVWEAVFERLAKDDTHNWKCEQNEEMSKSPRLFALNDDILIEEVVEGNTNDSEDVTPEQLEQRKGEQMIQYLDSVCTDVITFIRSSVDSEIDEENGNERTKLNDKWLRNFKITGDKVLPKEKLFDTFLECLESTMLNATHVQYVSFIWLYFCSLSQEYEKKMLEHLWQVTIRMPRAPADARKSQGAASYLAAFLARAKYVKKSTAFTWLEEVYIWLRHYVDQFGSGSSQILPGLQRHGTFYSVSQAFFLVFAFRYKEFVKNKDMLETIRRWGVGRVVHSPLEPLKYVSKPVARCFSAITRSLQLVYCNHIIPIEEVQRPFDDMFPFDCYHLKESSKFMTPLMRKFSPLAEDMSTLTKALCWNAATADKSEKSAEAVSSSEGLDFLDEDDAMMMGGSSGYRERTFSCGQSSLINYSATPGLQTFNV</sequence>
<proteinExistence type="inferred from homology"/>